<evidence type="ECO:0000255" key="1">
    <source>
        <dbReference type="HAMAP-Rule" id="MF_01333"/>
    </source>
</evidence>
<evidence type="ECO:0000305" key="2"/>
<dbReference type="EMBL" id="CP000117">
    <property type="protein sequence ID" value="ABA20327.1"/>
    <property type="molecule type" value="Genomic_DNA"/>
</dbReference>
<dbReference type="SMR" id="Q3MFA9"/>
<dbReference type="STRING" id="240292.Ava_0703"/>
<dbReference type="KEGG" id="ava:Ava_0703"/>
<dbReference type="eggNOG" id="COG0094">
    <property type="taxonomic scope" value="Bacteria"/>
</dbReference>
<dbReference type="HOGENOM" id="CLU_061015_2_1_3"/>
<dbReference type="Proteomes" id="UP000002533">
    <property type="component" value="Chromosome"/>
</dbReference>
<dbReference type="GO" id="GO:1990904">
    <property type="term" value="C:ribonucleoprotein complex"/>
    <property type="evidence" value="ECO:0007669"/>
    <property type="project" value="UniProtKB-KW"/>
</dbReference>
<dbReference type="GO" id="GO:0005840">
    <property type="term" value="C:ribosome"/>
    <property type="evidence" value="ECO:0007669"/>
    <property type="project" value="UniProtKB-KW"/>
</dbReference>
<dbReference type="GO" id="GO:0019843">
    <property type="term" value="F:rRNA binding"/>
    <property type="evidence" value="ECO:0007669"/>
    <property type="project" value="UniProtKB-UniRule"/>
</dbReference>
<dbReference type="GO" id="GO:0003735">
    <property type="term" value="F:structural constituent of ribosome"/>
    <property type="evidence" value="ECO:0007669"/>
    <property type="project" value="InterPro"/>
</dbReference>
<dbReference type="GO" id="GO:0000049">
    <property type="term" value="F:tRNA binding"/>
    <property type="evidence" value="ECO:0007669"/>
    <property type="project" value="UniProtKB-UniRule"/>
</dbReference>
<dbReference type="GO" id="GO:0006412">
    <property type="term" value="P:translation"/>
    <property type="evidence" value="ECO:0007669"/>
    <property type="project" value="UniProtKB-UniRule"/>
</dbReference>
<dbReference type="FunFam" id="3.30.1440.10:FF:000001">
    <property type="entry name" value="50S ribosomal protein L5"/>
    <property type="match status" value="1"/>
</dbReference>
<dbReference type="Gene3D" id="3.30.1440.10">
    <property type="match status" value="1"/>
</dbReference>
<dbReference type="HAMAP" id="MF_01333_B">
    <property type="entry name" value="Ribosomal_uL5_B"/>
    <property type="match status" value="1"/>
</dbReference>
<dbReference type="InterPro" id="IPR002132">
    <property type="entry name" value="Ribosomal_uL5"/>
</dbReference>
<dbReference type="InterPro" id="IPR020930">
    <property type="entry name" value="Ribosomal_uL5_bac-type"/>
</dbReference>
<dbReference type="InterPro" id="IPR031309">
    <property type="entry name" value="Ribosomal_uL5_C"/>
</dbReference>
<dbReference type="InterPro" id="IPR020929">
    <property type="entry name" value="Ribosomal_uL5_CS"/>
</dbReference>
<dbReference type="InterPro" id="IPR022803">
    <property type="entry name" value="Ribosomal_uL5_dom_sf"/>
</dbReference>
<dbReference type="InterPro" id="IPR031310">
    <property type="entry name" value="Ribosomal_uL5_N"/>
</dbReference>
<dbReference type="NCBIfam" id="NF000585">
    <property type="entry name" value="PRK00010.1"/>
    <property type="match status" value="1"/>
</dbReference>
<dbReference type="PANTHER" id="PTHR11994">
    <property type="entry name" value="60S RIBOSOMAL PROTEIN L11-RELATED"/>
    <property type="match status" value="1"/>
</dbReference>
<dbReference type="Pfam" id="PF00281">
    <property type="entry name" value="Ribosomal_L5"/>
    <property type="match status" value="1"/>
</dbReference>
<dbReference type="Pfam" id="PF00673">
    <property type="entry name" value="Ribosomal_L5_C"/>
    <property type="match status" value="1"/>
</dbReference>
<dbReference type="PIRSF" id="PIRSF002161">
    <property type="entry name" value="Ribosomal_L5"/>
    <property type="match status" value="1"/>
</dbReference>
<dbReference type="SUPFAM" id="SSF55282">
    <property type="entry name" value="RL5-like"/>
    <property type="match status" value="1"/>
</dbReference>
<dbReference type="PROSITE" id="PS00358">
    <property type="entry name" value="RIBOSOMAL_L5"/>
    <property type="match status" value="1"/>
</dbReference>
<accession>Q3MFA9</accession>
<gene>
    <name evidence="1" type="primary">rplE</name>
    <name evidence="1" type="synonym">rpl5</name>
    <name type="ordered locus">Ava_0703</name>
</gene>
<sequence length="182" mass="20535">MATTRLKTLYQETIIPKLTQQFQYTNVHQVPKLVKITVNRGLGEAAQNAKSLEASLTEIATITGQKPVVTRAKKAIAGFKIRQGMPVGIMVTLRGERMYAFFDRLISLSLPRIRDFRGISPKSFDGRGNYTLGVREQLIFPEIEYDSIDQIRGLDISIITTAKNDEEGRALLKEFGMPFRDQ</sequence>
<protein>
    <recommendedName>
        <fullName evidence="1">Large ribosomal subunit protein uL5</fullName>
    </recommendedName>
    <alternativeName>
        <fullName evidence="2">50S ribosomal protein L5</fullName>
    </alternativeName>
</protein>
<organism>
    <name type="scientific">Trichormus variabilis (strain ATCC 29413 / PCC 7937)</name>
    <name type="common">Anabaena variabilis</name>
    <dbReference type="NCBI Taxonomy" id="240292"/>
    <lineage>
        <taxon>Bacteria</taxon>
        <taxon>Bacillati</taxon>
        <taxon>Cyanobacteriota</taxon>
        <taxon>Cyanophyceae</taxon>
        <taxon>Nostocales</taxon>
        <taxon>Nostocaceae</taxon>
        <taxon>Trichormus</taxon>
    </lineage>
</organism>
<name>RL5_TRIV2</name>
<comment type="function">
    <text evidence="1">This is one of the proteins that bind and probably mediate the attachment of the 5S RNA into the large ribosomal subunit, where it forms part of the central protuberance. In the 70S ribosome it contacts protein S13 of the 30S subunit (bridge B1b), connecting the 2 subunits; this bridge is implicated in subunit movement. Contacts the P site tRNA; the 5S rRNA and some of its associated proteins might help stabilize positioning of ribosome-bound tRNAs.</text>
</comment>
<comment type="subunit">
    <text evidence="1">Part of the 50S ribosomal subunit; part of the 5S rRNA/L5/L18/L25 subcomplex. Contacts the 5S rRNA and the P site tRNA. Forms a bridge to the 30S subunit in the 70S ribosome.</text>
</comment>
<comment type="similarity">
    <text evidence="1">Belongs to the universal ribosomal protein uL5 family.</text>
</comment>
<feature type="chain" id="PRO_0000242959" description="Large ribosomal subunit protein uL5">
    <location>
        <begin position="1"/>
        <end position="182"/>
    </location>
</feature>
<keyword id="KW-0687">Ribonucleoprotein</keyword>
<keyword id="KW-0689">Ribosomal protein</keyword>
<keyword id="KW-0694">RNA-binding</keyword>
<keyword id="KW-0699">rRNA-binding</keyword>
<keyword id="KW-0820">tRNA-binding</keyword>
<proteinExistence type="inferred from homology"/>
<reference key="1">
    <citation type="journal article" date="2014" name="Stand. Genomic Sci.">
        <title>Complete genome sequence of Anabaena variabilis ATCC 29413.</title>
        <authorList>
            <person name="Thiel T."/>
            <person name="Pratte B.S."/>
            <person name="Zhong J."/>
            <person name="Goodwin L."/>
            <person name="Copeland A."/>
            <person name="Lucas S."/>
            <person name="Han C."/>
            <person name="Pitluck S."/>
            <person name="Land M.L."/>
            <person name="Kyrpides N.C."/>
            <person name="Woyke T."/>
        </authorList>
    </citation>
    <scope>NUCLEOTIDE SEQUENCE [LARGE SCALE GENOMIC DNA]</scope>
    <source>
        <strain>ATCC 29413 / PCC 7937</strain>
    </source>
</reference>